<dbReference type="EC" id="4.2.1.33" evidence="1"/>
<dbReference type="EMBL" id="AM420293">
    <property type="protein sequence ID" value="CAM05316.1"/>
    <property type="molecule type" value="Genomic_DNA"/>
</dbReference>
<dbReference type="RefSeq" id="WP_009944411.1">
    <property type="nucleotide sequence ID" value="NC_009142.1"/>
</dbReference>
<dbReference type="SMR" id="A4FMP1"/>
<dbReference type="STRING" id="405948.SACE_6143"/>
<dbReference type="KEGG" id="sen:SACE_6143"/>
<dbReference type="eggNOG" id="COG0066">
    <property type="taxonomic scope" value="Bacteria"/>
</dbReference>
<dbReference type="HOGENOM" id="CLU_081378_0_1_11"/>
<dbReference type="OrthoDB" id="9777465at2"/>
<dbReference type="UniPathway" id="UPA00048">
    <property type="reaction ID" value="UER00071"/>
</dbReference>
<dbReference type="Proteomes" id="UP000006728">
    <property type="component" value="Chromosome"/>
</dbReference>
<dbReference type="GO" id="GO:0009316">
    <property type="term" value="C:3-isopropylmalate dehydratase complex"/>
    <property type="evidence" value="ECO:0007669"/>
    <property type="project" value="InterPro"/>
</dbReference>
<dbReference type="GO" id="GO:0003861">
    <property type="term" value="F:3-isopropylmalate dehydratase activity"/>
    <property type="evidence" value="ECO:0007669"/>
    <property type="project" value="UniProtKB-UniRule"/>
</dbReference>
<dbReference type="GO" id="GO:0009098">
    <property type="term" value="P:L-leucine biosynthetic process"/>
    <property type="evidence" value="ECO:0007669"/>
    <property type="project" value="UniProtKB-UniRule"/>
</dbReference>
<dbReference type="CDD" id="cd01577">
    <property type="entry name" value="IPMI_Swivel"/>
    <property type="match status" value="1"/>
</dbReference>
<dbReference type="FunFam" id="3.20.19.10:FF:000003">
    <property type="entry name" value="3-isopropylmalate dehydratase small subunit"/>
    <property type="match status" value="1"/>
</dbReference>
<dbReference type="Gene3D" id="3.20.19.10">
    <property type="entry name" value="Aconitase, domain 4"/>
    <property type="match status" value="1"/>
</dbReference>
<dbReference type="HAMAP" id="MF_01031">
    <property type="entry name" value="LeuD_type1"/>
    <property type="match status" value="1"/>
</dbReference>
<dbReference type="InterPro" id="IPR004431">
    <property type="entry name" value="3-IsopropMal_deHydase_ssu"/>
</dbReference>
<dbReference type="InterPro" id="IPR015928">
    <property type="entry name" value="Aconitase/3IPM_dehydase_swvl"/>
</dbReference>
<dbReference type="InterPro" id="IPR000573">
    <property type="entry name" value="AconitaseA/IPMdHydase_ssu_swvl"/>
</dbReference>
<dbReference type="InterPro" id="IPR033940">
    <property type="entry name" value="IPMI_Swivel"/>
</dbReference>
<dbReference type="InterPro" id="IPR050075">
    <property type="entry name" value="LeuD"/>
</dbReference>
<dbReference type="NCBIfam" id="TIGR00171">
    <property type="entry name" value="leuD"/>
    <property type="match status" value="1"/>
</dbReference>
<dbReference type="NCBIfam" id="NF002458">
    <property type="entry name" value="PRK01641.1"/>
    <property type="match status" value="1"/>
</dbReference>
<dbReference type="PANTHER" id="PTHR43345:SF5">
    <property type="entry name" value="3-ISOPROPYLMALATE DEHYDRATASE SMALL SUBUNIT"/>
    <property type="match status" value="1"/>
</dbReference>
<dbReference type="PANTHER" id="PTHR43345">
    <property type="entry name" value="3-ISOPROPYLMALATE DEHYDRATASE SMALL SUBUNIT 2-RELATED-RELATED"/>
    <property type="match status" value="1"/>
</dbReference>
<dbReference type="Pfam" id="PF00694">
    <property type="entry name" value="Aconitase_C"/>
    <property type="match status" value="1"/>
</dbReference>
<dbReference type="SUPFAM" id="SSF52016">
    <property type="entry name" value="LeuD/IlvD-like"/>
    <property type="match status" value="1"/>
</dbReference>
<gene>
    <name evidence="1" type="primary">leuD</name>
    <name type="ordered locus">SACE_6143</name>
</gene>
<feature type="chain" id="PRO_1000063828" description="3-isopropylmalate dehydratase small subunit">
    <location>
        <begin position="1"/>
        <end position="200"/>
    </location>
</feature>
<reference key="1">
    <citation type="journal article" date="2007" name="Nat. Biotechnol.">
        <title>Complete genome sequence of the erythromycin-producing bacterium Saccharopolyspora erythraea NRRL23338.</title>
        <authorList>
            <person name="Oliynyk M."/>
            <person name="Samborskyy M."/>
            <person name="Lester J.B."/>
            <person name="Mironenko T."/>
            <person name="Scott N."/>
            <person name="Dickens S."/>
            <person name="Haydock S.F."/>
            <person name="Leadlay P.F."/>
        </authorList>
    </citation>
    <scope>NUCLEOTIDE SEQUENCE [LARGE SCALE GENOMIC DNA]</scope>
    <source>
        <strain>ATCC 11635 / DSM 40517 / JCM 4748 / NBRC 13426 / NCIMB 8594 / NRRL 2338</strain>
    </source>
</reference>
<comment type="function">
    <text evidence="1">Catalyzes the isomerization between 2-isopropylmalate and 3-isopropylmalate, via the formation of 2-isopropylmaleate.</text>
</comment>
<comment type="catalytic activity">
    <reaction evidence="1">
        <text>(2R,3S)-3-isopropylmalate = (2S)-2-isopropylmalate</text>
        <dbReference type="Rhea" id="RHEA:32287"/>
        <dbReference type="ChEBI" id="CHEBI:1178"/>
        <dbReference type="ChEBI" id="CHEBI:35121"/>
        <dbReference type="EC" id="4.2.1.33"/>
    </reaction>
</comment>
<comment type="pathway">
    <text evidence="1">Amino-acid biosynthesis; L-leucine biosynthesis; L-leucine from 3-methyl-2-oxobutanoate: step 2/4.</text>
</comment>
<comment type="subunit">
    <text evidence="1">Heterodimer of LeuC and LeuD.</text>
</comment>
<comment type="similarity">
    <text evidence="1">Belongs to the LeuD family. LeuD type 1 subfamily.</text>
</comment>
<evidence type="ECO:0000255" key="1">
    <source>
        <dbReference type="HAMAP-Rule" id="MF_01031"/>
    </source>
</evidence>
<organism>
    <name type="scientific">Saccharopolyspora erythraea (strain ATCC 11635 / DSM 40517 / JCM 4748 / NBRC 13426 / NCIMB 8594 / NRRL 2338)</name>
    <dbReference type="NCBI Taxonomy" id="405948"/>
    <lineage>
        <taxon>Bacteria</taxon>
        <taxon>Bacillati</taxon>
        <taxon>Actinomycetota</taxon>
        <taxon>Actinomycetes</taxon>
        <taxon>Pseudonocardiales</taxon>
        <taxon>Pseudonocardiaceae</taxon>
        <taxon>Saccharopolyspora</taxon>
    </lineage>
</organism>
<sequence length="200" mass="22323">MEPFKTHTGVGVPLRRSNVDTDQIIPAVYLKRVSRTGFEDALFAAWRADDDFILNNPHFRNGSVLVAGPDFGTGSSREHAVWALKDYGFRVVISSRFADIFRGNSGKQGLLAARCEQSDVELLWKVLETEPGTSVTVDLEARTVHAKDLTVPFEIDDYTRWRLLEGLDDIGLTLRQAETIDTFEKTRPSFKPATLPARAG</sequence>
<accession>A4FMP1</accession>
<protein>
    <recommendedName>
        <fullName evidence="1">3-isopropylmalate dehydratase small subunit</fullName>
        <ecNumber evidence="1">4.2.1.33</ecNumber>
    </recommendedName>
    <alternativeName>
        <fullName evidence="1">Alpha-IPM isomerase</fullName>
        <shortName evidence="1">IPMI</shortName>
    </alternativeName>
    <alternativeName>
        <fullName evidence="1">Isopropylmalate isomerase</fullName>
    </alternativeName>
</protein>
<proteinExistence type="inferred from homology"/>
<name>LEUD_SACEN</name>
<keyword id="KW-0028">Amino-acid biosynthesis</keyword>
<keyword id="KW-0100">Branched-chain amino acid biosynthesis</keyword>
<keyword id="KW-0432">Leucine biosynthesis</keyword>
<keyword id="KW-0456">Lyase</keyword>
<keyword id="KW-1185">Reference proteome</keyword>